<feature type="chain" id="PRO_1000095815" description="Tryptophan synthase beta chain">
    <location>
        <begin position="1"/>
        <end position="397"/>
    </location>
</feature>
<feature type="modified residue" description="N6-(pyridoxal phosphate)lysine" evidence="1">
    <location>
        <position position="87"/>
    </location>
</feature>
<evidence type="ECO:0000255" key="1">
    <source>
        <dbReference type="HAMAP-Rule" id="MF_00133"/>
    </source>
</evidence>
<protein>
    <recommendedName>
        <fullName evidence="1">Tryptophan synthase beta chain</fullName>
        <ecNumber evidence="1">4.2.1.20</ecNumber>
    </recommendedName>
</protein>
<name>TRPB_SALA4</name>
<dbReference type="EC" id="4.2.1.20" evidence="1"/>
<dbReference type="EMBL" id="CP001138">
    <property type="protein sequence ID" value="ACH50791.1"/>
    <property type="molecule type" value="Genomic_DNA"/>
</dbReference>
<dbReference type="RefSeq" id="WP_000209485.1">
    <property type="nucleotide sequence ID" value="NC_011149.1"/>
</dbReference>
<dbReference type="SMR" id="B5F4M4"/>
<dbReference type="KEGG" id="sea:SeAg_B1420"/>
<dbReference type="HOGENOM" id="CLU_016734_3_1_6"/>
<dbReference type="UniPathway" id="UPA00035">
    <property type="reaction ID" value="UER00044"/>
</dbReference>
<dbReference type="Proteomes" id="UP000008819">
    <property type="component" value="Chromosome"/>
</dbReference>
<dbReference type="GO" id="GO:0005737">
    <property type="term" value="C:cytoplasm"/>
    <property type="evidence" value="ECO:0007669"/>
    <property type="project" value="TreeGrafter"/>
</dbReference>
<dbReference type="GO" id="GO:0004834">
    <property type="term" value="F:tryptophan synthase activity"/>
    <property type="evidence" value="ECO:0007669"/>
    <property type="project" value="UniProtKB-UniRule"/>
</dbReference>
<dbReference type="CDD" id="cd06446">
    <property type="entry name" value="Trp-synth_B"/>
    <property type="match status" value="1"/>
</dbReference>
<dbReference type="FunFam" id="3.40.50.1100:FF:000001">
    <property type="entry name" value="Tryptophan synthase beta chain"/>
    <property type="match status" value="1"/>
</dbReference>
<dbReference type="FunFam" id="3.40.50.1100:FF:000004">
    <property type="entry name" value="Tryptophan synthase beta chain"/>
    <property type="match status" value="1"/>
</dbReference>
<dbReference type="Gene3D" id="3.40.50.1100">
    <property type="match status" value="2"/>
</dbReference>
<dbReference type="HAMAP" id="MF_00133">
    <property type="entry name" value="Trp_synth_beta"/>
    <property type="match status" value="1"/>
</dbReference>
<dbReference type="InterPro" id="IPR006653">
    <property type="entry name" value="Trp_synth_b_CS"/>
</dbReference>
<dbReference type="InterPro" id="IPR006654">
    <property type="entry name" value="Trp_synth_beta"/>
</dbReference>
<dbReference type="InterPro" id="IPR023026">
    <property type="entry name" value="Trp_synth_beta/beta-like"/>
</dbReference>
<dbReference type="InterPro" id="IPR001926">
    <property type="entry name" value="TrpB-like_PALP"/>
</dbReference>
<dbReference type="InterPro" id="IPR036052">
    <property type="entry name" value="TrpB-like_PALP_sf"/>
</dbReference>
<dbReference type="NCBIfam" id="TIGR00263">
    <property type="entry name" value="trpB"/>
    <property type="match status" value="1"/>
</dbReference>
<dbReference type="PANTHER" id="PTHR48077:SF3">
    <property type="entry name" value="TRYPTOPHAN SYNTHASE"/>
    <property type="match status" value="1"/>
</dbReference>
<dbReference type="PANTHER" id="PTHR48077">
    <property type="entry name" value="TRYPTOPHAN SYNTHASE-RELATED"/>
    <property type="match status" value="1"/>
</dbReference>
<dbReference type="Pfam" id="PF00291">
    <property type="entry name" value="PALP"/>
    <property type="match status" value="1"/>
</dbReference>
<dbReference type="PIRSF" id="PIRSF001413">
    <property type="entry name" value="Trp_syn_beta"/>
    <property type="match status" value="1"/>
</dbReference>
<dbReference type="SUPFAM" id="SSF53686">
    <property type="entry name" value="Tryptophan synthase beta subunit-like PLP-dependent enzymes"/>
    <property type="match status" value="1"/>
</dbReference>
<dbReference type="PROSITE" id="PS00168">
    <property type="entry name" value="TRP_SYNTHASE_BETA"/>
    <property type="match status" value="1"/>
</dbReference>
<reference key="1">
    <citation type="journal article" date="2011" name="J. Bacteriol.">
        <title>Comparative genomics of 28 Salmonella enterica isolates: evidence for CRISPR-mediated adaptive sublineage evolution.</title>
        <authorList>
            <person name="Fricke W.F."/>
            <person name="Mammel M.K."/>
            <person name="McDermott P.F."/>
            <person name="Tartera C."/>
            <person name="White D.G."/>
            <person name="Leclerc J.E."/>
            <person name="Ravel J."/>
            <person name="Cebula T.A."/>
        </authorList>
    </citation>
    <scope>NUCLEOTIDE SEQUENCE [LARGE SCALE GENOMIC DNA]</scope>
    <source>
        <strain>SL483</strain>
    </source>
</reference>
<sequence>MTTLLNPYFGEFGGMYVPQILMPALNQLEEAFVSAQKDPEFQAQFADLLKNYAGRPTALTKCQNITAGTRTTLYLKREDLLHGGAHKTNQVLGQALLAKRMGKSEIIAETGAGQHGVASALASALLGLKCRIYMGAKDVERQSPNVFRMRLMGAEVIPVHSGSATLKDACNEALRDWSGSYETAHYMLGTAAGPHPYPTIVREFQRMIGEETKAQILDKEGRLPDAVIACVGGGSNAIGMFADFINDTSVGLIGVEPGGHGIETGEHGAPLKHGRVGIYFGMKAPMMQTADGQIEESYSISAGLDFPSVGPQHAYLNSIGRADYVSITDDEALEAFKTLCRHEGIIPALESSHALAHALKMMREQPEKEQLLVVNLSGRGDKDIFTVHDILKARGEI</sequence>
<keyword id="KW-0028">Amino-acid biosynthesis</keyword>
<keyword id="KW-0057">Aromatic amino acid biosynthesis</keyword>
<keyword id="KW-0456">Lyase</keyword>
<keyword id="KW-0663">Pyridoxal phosphate</keyword>
<keyword id="KW-0822">Tryptophan biosynthesis</keyword>
<proteinExistence type="inferred from homology"/>
<comment type="function">
    <text evidence="1">The beta subunit is responsible for the synthesis of L-tryptophan from indole and L-serine.</text>
</comment>
<comment type="catalytic activity">
    <reaction evidence="1">
        <text>(1S,2R)-1-C-(indol-3-yl)glycerol 3-phosphate + L-serine = D-glyceraldehyde 3-phosphate + L-tryptophan + H2O</text>
        <dbReference type="Rhea" id="RHEA:10532"/>
        <dbReference type="ChEBI" id="CHEBI:15377"/>
        <dbReference type="ChEBI" id="CHEBI:33384"/>
        <dbReference type="ChEBI" id="CHEBI:57912"/>
        <dbReference type="ChEBI" id="CHEBI:58866"/>
        <dbReference type="ChEBI" id="CHEBI:59776"/>
        <dbReference type="EC" id="4.2.1.20"/>
    </reaction>
</comment>
<comment type="cofactor">
    <cofactor evidence="1">
        <name>pyridoxal 5'-phosphate</name>
        <dbReference type="ChEBI" id="CHEBI:597326"/>
    </cofactor>
</comment>
<comment type="pathway">
    <text evidence="1">Amino-acid biosynthesis; L-tryptophan biosynthesis; L-tryptophan from chorismate: step 5/5.</text>
</comment>
<comment type="subunit">
    <text evidence="1">Tetramer of two alpha and two beta chains.</text>
</comment>
<comment type="similarity">
    <text evidence="1">Belongs to the TrpB family.</text>
</comment>
<accession>B5F4M4</accession>
<gene>
    <name evidence="1" type="primary">trpB</name>
    <name type="ordered locus">SeAg_B1420</name>
</gene>
<organism>
    <name type="scientific">Salmonella agona (strain SL483)</name>
    <dbReference type="NCBI Taxonomy" id="454166"/>
    <lineage>
        <taxon>Bacteria</taxon>
        <taxon>Pseudomonadati</taxon>
        <taxon>Pseudomonadota</taxon>
        <taxon>Gammaproteobacteria</taxon>
        <taxon>Enterobacterales</taxon>
        <taxon>Enterobacteriaceae</taxon>
        <taxon>Salmonella</taxon>
    </lineage>
</organism>